<name>RL1_HYDCU</name>
<proteinExistence type="inferred from homology"/>
<organism>
    <name type="scientific">Hydrogenovibrio crunogenus (strain DSM 25203 / XCL-2)</name>
    <name type="common">Thiomicrospira crunogena</name>
    <dbReference type="NCBI Taxonomy" id="317025"/>
    <lineage>
        <taxon>Bacteria</taxon>
        <taxon>Pseudomonadati</taxon>
        <taxon>Pseudomonadota</taxon>
        <taxon>Gammaproteobacteria</taxon>
        <taxon>Thiotrichales</taxon>
        <taxon>Piscirickettsiaceae</taxon>
        <taxon>Hydrogenovibrio</taxon>
    </lineage>
</organism>
<accession>Q31IZ2</accession>
<evidence type="ECO:0000255" key="1">
    <source>
        <dbReference type="HAMAP-Rule" id="MF_01318"/>
    </source>
</evidence>
<evidence type="ECO:0000305" key="2"/>
<comment type="function">
    <text evidence="1">Binds directly to 23S rRNA. The L1 stalk is quite mobile in the ribosome, and is involved in E site tRNA release.</text>
</comment>
<comment type="function">
    <text evidence="1">Protein L1 is also a translational repressor protein, it controls the translation of the L11 operon by binding to its mRNA.</text>
</comment>
<comment type="subunit">
    <text evidence="1">Part of the 50S ribosomal subunit.</text>
</comment>
<comment type="similarity">
    <text evidence="1">Belongs to the universal ribosomal protein uL1 family.</text>
</comment>
<keyword id="KW-0678">Repressor</keyword>
<keyword id="KW-0687">Ribonucleoprotein</keyword>
<keyword id="KW-0689">Ribosomal protein</keyword>
<keyword id="KW-0694">RNA-binding</keyword>
<keyword id="KW-0699">rRNA-binding</keyword>
<keyword id="KW-0810">Translation regulation</keyword>
<keyword id="KW-0820">tRNA-binding</keyword>
<feature type="chain" id="PRO_0000230648" description="Large ribosomal subunit protein uL1">
    <location>
        <begin position="1"/>
        <end position="231"/>
    </location>
</feature>
<gene>
    <name evidence="1" type="primary">rplA</name>
    <name type="ordered locus">Tcr_0285</name>
</gene>
<sequence length="231" mass="24188">MGMAKLTKKQKMFAEKVDSLKSYDALEGFSLVSELATAKFSESIDVAIKLGIDPRKSDQVVRGATVMPNGTGKDVRVAVFTGDANAAAAKEAGAEFVGMDDLAAEVKGGMMDFDVVIASPDAMRVVGMLGQVLGPRGLMPNPKTGTVTPDVVTAIKNAKSGQVRFRADKAGIVHASIGKVDFAPEKLKENLNALIEDLNKAKPAAAKGTYMKKVSISSTMGPGIVLDQSSL</sequence>
<dbReference type="EMBL" id="CP000109">
    <property type="protein sequence ID" value="ABB40881.1"/>
    <property type="molecule type" value="Genomic_DNA"/>
</dbReference>
<dbReference type="SMR" id="Q31IZ2"/>
<dbReference type="STRING" id="317025.Tcr_0285"/>
<dbReference type="KEGG" id="tcx:Tcr_0285"/>
<dbReference type="eggNOG" id="COG0081">
    <property type="taxonomic scope" value="Bacteria"/>
</dbReference>
<dbReference type="HOGENOM" id="CLU_062853_0_0_6"/>
<dbReference type="GO" id="GO:0022625">
    <property type="term" value="C:cytosolic large ribosomal subunit"/>
    <property type="evidence" value="ECO:0007669"/>
    <property type="project" value="TreeGrafter"/>
</dbReference>
<dbReference type="GO" id="GO:0019843">
    <property type="term" value="F:rRNA binding"/>
    <property type="evidence" value="ECO:0007669"/>
    <property type="project" value="UniProtKB-UniRule"/>
</dbReference>
<dbReference type="GO" id="GO:0003735">
    <property type="term" value="F:structural constituent of ribosome"/>
    <property type="evidence" value="ECO:0007669"/>
    <property type="project" value="InterPro"/>
</dbReference>
<dbReference type="GO" id="GO:0000049">
    <property type="term" value="F:tRNA binding"/>
    <property type="evidence" value="ECO:0007669"/>
    <property type="project" value="UniProtKB-KW"/>
</dbReference>
<dbReference type="GO" id="GO:0006417">
    <property type="term" value="P:regulation of translation"/>
    <property type="evidence" value="ECO:0007669"/>
    <property type="project" value="UniProtKB-KW"/>
</dbReference>
<dbReference type="GO" id="GO:0006412">
    <property type="term" value="P:translation"/>
    <property type="evidence" value="ECO:0007669"/>
    <property type="project" value="UniProtKB-UniRule"/>
</dbReference>
<dbReference type="CDD" id="cd00403">
    <property type="entry name" value="Ribosomal_L1"/>
    <property type="match status" value="1"/>
</dbReference>
<dbReference type="FunFam" id="3.40.50.790:FF:000001">
    <property type="entry name" value="50S ribosomal protein L1"/>
    <property type="match status" value="1"/>
</dbReference>
<dbReference type="Gene3D" id="3.30.190.20">
    <property type="match status" value="1"/>
</dbReference>
<dbReference type="Gene3D" id="3.40.50.790">
    <property type="match status" value="1"/>
</dbReference>
<dbReference type="HAMAP" id="MF_01318_B">
    <property type="entry name" value="Ribosomal_uL1_B"/>
    <property type="match status" value="1"/>
</dbReference>
<dbReference type="InterPro" id="IPR005878">
    <property type="entry name" value="Ribosom_uL1_bac-type"/>
</dbReference>
<dbReference type="InterPro" id="IPR002143">
    <property type="entry name" value="Ribosomal_uL1"/>
</dbReference>
<dbReference type="InterPro" id="IPR023674">
    <property type="entry name" value="Ribosomal_uL1-like"/>
</dbReference>
<dbReference type="InterPro" id="IPR028364">
    <property type="entry name" value="Ribosomal_uL1/biogenesis"/>
</dbReference>
<dbReference type="InterPro" id="IPR016095">
    <property type="entry name" value="Ribosomal_uL1_3-a/b-sand"/>
</dbReference>
<dbReference type="InterPro" id="IPR023673">
    <property type="entry name" value="Ribosomal_uL1_CS"/>
</dbReference>
<dbReference type="NCBIfam" id="TIGR01169">
    <property type="entry name" value="rplA_bact"/>
    <property type="match status" value="1"/>
</dbReference>
<dbReference type="PANTHER" id="PTHR36427">
    <property type="entry name" value="54S RIBOSOMAL PROTEIN L1, MITOCHONDRIAL"/>
    <property type="match status" value="1"/>
</dbReference>
<dbReference type="PANTHER" id="PTHR36427:SF3">
    <property type="entry name" value="LARGE RIBOSOMAL SUBUNIT PROTEIN UL1M"/>
    <property type="match status" value="1"/>
</dbReference>
<dbReference type="Pfam" id="PF00687">
    <property type="entry name" value="Ribosomal_L1"/>
    <property type="match status" value="1"/>
</dbReference>
<dbReference type="PIRSF" id="PIRSF002155">
    <property type="entry name" value="Ribosomal_L1"/>
    <property type="match status" value="1"/>
</dbReference>
<dbReference type="SUPFAM" id="SSF56808">
    <property type="entry name" value="Ribosomal protein L1"/>
    <property type="match status" value="1"/>
</dbReference>
<dbReference type="PROSITE" id="PS01199">
    <property type="entry name" value="RIBOSOMAL_L1"/>
    <property type="match status" value="1"/>
</dbReference>
<protein>
    <recommendedName>
        <fullName evidence="1">Large ribosomal subunit protein uL1</fullName>
    </recommendedName>
    <alternativeName>
        <fullName evidence="2">50S ribosomal protein L1</fullName>
    </alternativeName>
</protein>
<reference key="1">
    <citation type="journal article" date="2006" name="PLoS Biol.">
        <title>The genome of deep-sea vent chemolithoautotroph Thiomicrospira crunogena XCL-2.</title>
        <authorList>
            <person name="Scott K.M."/>
            <person name="Sievert S.M."/>
            <person name="Abril F.N."/>
            <person name="Ball L.A."/>
            <person name="Barrett C.J."/>
            <person name="Blake R.A."/>
            <person name="Boller A.J."/>
            <person name="Chain P.S.G."/>
            <person name="Clark J.A."/>
            <person name="Davis C.R."/>
            <person name="Detter C."/>
            <person name="Do K.F."/>
            <person name="Dobrinski K.P."/>
            <person name="Faza B.I."/>
            <person name="Fitzpatrick K.A."/>
            <person name="Freyermuth S.K."/>
            <person name="Harmer T.L."/>
            <person name="Hauser L.J."/>
            <person name="Huegler M."/>
            <person name="Kerfeld C.A."/>
            <person name="Klotz M.G."/>
            <person name="Kong W.W."/>
            <person name="Land M."/>
            <person name="Lapidus A."/>
            <person name="Larimer F.W."/>
            <person name="Longo D.L."/>
            <person name="Lucas S."/>
            <person name="Malfatti S.A."/>
            <person name="Massey S.E."/>
            <person name="Martin D.D."/>
            <person name="McCuddin Z."/>
            <person name="Meyer F."/>
            <person name="Moore J.L."/>
            <person name="Ocampo L.H. Jr."/>
            <person name="Paul J.H."/>
            <person name="Paulsen I.T."/>
            <person name="Reep D.K."/>
            <person name="Ren Q."/>
            <person name="Ross R.L."/>
            <person name="Sato P.Y."/>
            <person name="Thomas P."/>
            <person name="Tinkham L.E."/>
            <person name="Zeruth G.T."/>
        </authorList>
    </citation>
    <scope>NUCLEOTIDE SEQUENCE [LARGE SCALE GENOMIC DNA]</scope>
    <source>
        <strain>DSM 25203 / XCL-2</strain>
    </source>
</reference>